<gene>
    <name type="primary">gab-1</name>
    <name type="ORF">ZC482.1</name>
</gene>
<keyword id="KW-1003">Cell membrane</keyword>
<keyword id="KW-0868">Chloride</keyword>
<keyword id="KW-0869">Chloride channel</keyword>
<keyword id="KW-1015">Disulfide bond</keyword>
<keyword id="KW-0325">Glycoprotein</keyword>
<keyword id="KW-0407">Ion channel</keyword>
<keyword id="KW-0406">Ion transport</keyword>
<keyword id="KW-1071">Ligand-gated ion channel</keyword>
<keyword id="KW-0472">Membrane</keyword>
<keyword id="KW-0628">Postsynaptic cell membrane</keyword>
<keyword id="KW-0675">Receptor</keyword>
<keyword id="KW-1185">Reference proteome</keyword>
<keyword id="KW-0732">Signal</keyword>
<keyword id="KW-0770">Synapse</keyword>
<keyword id="KW-0812">Transmembrane</keyword>
<keyword id="KW-1133">Transmembrane helix</keyword>
<keyword id="KW-0813">Transport</keyword>
<protein>
    <recommendedName>
        <fullName>Gamma-aminobutyric acid receptor subunit beta</fullName>
    </recommendedName>
    <alternativeName>
        <fullName>GABA(A) receptor subunit beta</fullName>
    </alternativeName>
</protein>
<comment type="function">
    <text evidence="1 4">GABA, an inhibitory neurotransmitter, mediates neuronal inhibition by binding to the GABA receptor and opening an integral chloride channel.</text>
</comment>
<comment type="subcellular location">
    <subcellularLocation>
        <location evidence="1">Postsynaptic cell membrane</location>
        <topology evidence="1">Multi-pass membrane protein</topology>
    </subcellularLocation>
    <subcellularLocation>
        <location evidence="1">Cell membrane</location>
        <topology evidence="1">Multi-pass membrane protein</topology>
    </subcellularLocation>
</comment>
<comment type="similarity">
    <text evidence="5">Belongs to the ligand-gated ion channel (TC 1.A.9) family. Gamma-aminobutyric acid receptor (TC 1.A.9.5) subfamily.</text>
</comment>
<reference key="1">
    <citation type="journal article" date="2002" name="J. Neurochem.">
        <title>Study of the nematode putative GABA type-A receptor subunits: evidence for modulation by ivermectin.</title>
        <authorList>
            <person name="Feng X.-P."/>
            <person name="Hayashi J."/>
            <person name="Beech R.N."/>
            <person name="Prichard R.K."/>
        </authorList>
    </citation>
    <scope>NUCLEOTIDE SEQUENCE [MRNA]</scope>
    <scope>FUNCTION</scope>
</reference>
<reference key="2">
    <citation type="journal article" date="1998" name="Science">
        <title>Genome sequence of the nematode C. elegans: a platform for investigating biology.</title>
        <authorList>
            <consortium name="The C. elegans sequencing consortium"/>
        </authorList>
    </citation>
    <scope>NUCLEOTIDE SEQUENCE [LARGE SCALE GENOMIC DNA]</scope>
    <source>
        <strain>Bristol N2</strain>
    </source>
</reference>
<feature type="signal peptide" evidence="2">
    <location>
        <begin position="1"/>
        <end position="24"/>
    </location>
</feature>
<feature type="chain" id="PRO_0000255714" description="Gamma-aminobutyric acid receptor subunit beta">
    <location>
        <begin position="25"/>
        <end position="550"/>
    </location>
</feature>
<feature type="topological domain" description="Extracellular" evidence="2">
    <location>
        <begin position="25"/>
        <end position="264"/>
    </location>
</feature>
<feature type="transmembrane region" description="Helical" evidence="2">
    <location>
        <begin position="265"/>
        <end position="285"/>
    </location>
</feature>
<feature type="transmembrane region" description="Helical" evidence="2">
    <location>
        <begin position="292"/>
        <end position="311"/>
    </location>
</feature>
<feature type="transmembrane region" description="Helical" evidence="2">
    <location>
        <begin position="324"/>
        <end position="344"/>
    </location>
</feature>
<feature type="topological domain" description="Cytoplasmic" evidence="2">
    <location>
        <begin position="345"/>
        <end position="527"/>
    </location>
</feature>
<feature type="transmembrane region" description="Helical" evidence="2">
    <location>
        <begin position="528"/>
        <end position="548"/>
    </location>
</feature>
<feature type="region of interest" description="Disordered" evidence="3">
    <location>
        <begin position="405"/>
        <end position="465"/>
    </location>
</feature>
<feature type="compositionally biased region" description="Polar residues" evidence="3">
    <location>
        <begin position="406"/>
        <end position="421"/>
    </location>
</feature>
<feature type="glycosylation site" description="N-linked (GlcNAc...) asparagine" evidence="2">
    <location>
        <position position="26"/>
    </location>
</feature>
<feature type="glycosylation site" description="N-linked (GlcNAc...) asparagine" evidence="2">
    <location>
        <position position="32"/>
    </location>
</feature>
<feature type="glycosylation site" description="N-linked (GlcNAc...) asparagine" evidence="2">
    <location>
        <position position="33"/>
    </location>
</feature>
<feature type="glycosylation site" description="N-linked (GlcNAc...) asparagine" evidence="2">
    <location>
        <position position="45"/>
    </location>
</feature>
<feature type="glycosylation site" description="N-linked (GlcNAc...) asparagine" evidence="2">
    <location>
        <position position="53"/>
    </location>
</feature>
<feature type="glycosylation site" description="N-linked (GlcNAc...) asparagine" evidence="2">
    <location>
        <position position="193"/>
    </location>
</feature>
<feature type="disulfide bond" evidence="1">
    <location>
        <begin position="180"/>
        <end position="194"/>
    </location>
</feature>
<feature type="sequence conflict" description="In Ref. 1; AAN65376." evidence="5" ref="1">
    <original>L</original>
    <variation>S</variation>
    <location>
        <position position="16"/>
    </location>
</feature>
<feature type="sequence conflict" description="In Ref. 1; AAN65376." evidence="5" ref="1">
    <original>P</original>
    <variation>S</variation>
    <location>
        <position position="188"/>
    </location>
</feature>
<feature type="sequence conflict" description="In Ref. 1; AAN65376." evidence="5" ref="1">
    <original>Q</original>
    <variation>E</variation>
    <location>
        <position position="267"/>
    </location>
</feature>
<feature type="sequence conflict" description="In Ref. 1; AAN65376." evidence="5" ref="1">
    <original>V</original>
    <variation>D</variation>
    <location>
        <position position="273"/>
    </location>
</feature>
<evidence type="ECO:0000250" key="1"/>
<evidence type="ECO:0000255" key="2"/>
<evidence type="ECO:0000256" key="3">
    <source>
        <dbReference type="SAM" id="MobiDB-lite"/>
    </source>
</evidence>
<evidence type="ECO:0000269" key="4">
    <source>
    </source>
</evidence>
<evidence type="ECO:0000305" key="5"/>
<proteinExistence type="evidence at transcript level"/>
<sequence length="550" mass="62457">MRRSKTRRIFHVSITLLLVSTIFCQNGTKPHNNSTSDQMSSSWSNRSQTMYSNASSLLSDLLLDYDIRLRPGFGGDALLLTMDIIIASFDSISEVDMDYTLTMYLHQYWTDERLRWSNEIPIDEMTLSGEFSQNIWVPDTFLANDKHSYLHEVTERNKMLRINVDGKVAYGMRLTSTLSCSMNLRNFPLDSQNCTVEIESYGYTTSEVLMKWNYPLAVHGVEQADVPQFTITGFHTEDSIVSTATGSYQRLSLVFQLRRSVGYFIFQTYLPCVLIVMLSWVSFWINHEATSARVALGITTVLTMTTISTGVRQSLPRISYVKSIDIYLVMCFVFVFAALLEYAAVNYSYWGRERGKGGGGNEWPVNGANKEDRESAVNVQKWVPSGLMDGVPQPQDRRVEALEEAMSTSNTAAQNNNFESTSKPKKRSSSPIPPLCRAGNTISEESESPDYPRYSTTSLKGARPHASLNHKTHHLKGRSSARAKRRMTLARMNVSMKQSISGIGRRARKVIPTIRVRDVNLIDKYSRVVFPVCFIVFNLFYWSYYMMVPS</sequence>
<dbReference type="EMBL" id="AF498370">
    <property type="protein sequence ID" value="AAN65376.1"/>
    <property type="molecule type" value="mRNA"/>
</dbReference>
<dbReference type="EMBL" id="Z93397">
    <property type="protein sequence ID" value="CAB07719.3"/>
    <property type="molecule type" value="Genomic_DNA"/>
</dbReference>
<dbReference type="PIR" id="T27614">
    <property type="entry name" value="T27614"/>
</dbReference>
<dbReference type="RefSeq" id="NP_499661.2">
    <property type="nucleotide sequence ID" value="NM_067260.5"/>
</dbReference>
<dbReference type="SMR" id="O18276"/>
<dbReference type="BioGRID" id="41867">
    <property type="interactions" value="2"/>
</dbReference>
<dbReference type="FunCoup" id="O18276">
    <property type="interactions" value="381"/>
</dbReference>
<dbReference type="STRING" id="6239.ZC482.1.1"/>
<dbReference type="DrugCentral" id="O18276"/>
<dbReference type="GlyCosmos" id="O18276">
    <property type="glycosylation" value="6 sites, No reported glycans"/>
</dbReference>
<dbReference type="PaxDb" id="6239-ZC482.1"/>
<dbReference type="EnsemblMetazoa" id="ZC482.1.1">
    <property type="protein sequence ID" value="ZC482.1.1"/>
    <property type="gene ID" value="WBGene00001512"/>
</dbReference>
<dbReference type="GeneID" id="176691"/>
<dbReference type="KEGG" id="cel:CELE_ZC482.1"/>
<dbReference type="UCSC" id="ZC482.1">
    <property type="organism name" value="c. elegans"/>
</dbReference>
<dbReference type="AGR" id="WB:WBGene00001512"/>
<dbReference type="CTD" id="176691"/>
<dbReference type="WormBase" id="ZC482.1">
    <property type="protein sequence ID" value="CE33742"/>
    <property type="gene ID" value="WBGene00001512"/>
    <property type="gene designation" value="gab-1"/>
</dbReference>
<dbReference type="eggNOG" id="KOG3643">
    <property type="taxonomic scope" value="Eukaryota"/>
</dbReference>
<dbReference type="GeneTree" id="ENSGT00940000166778"/>
<dbReference type="HOGENOM" id="CLU_010920_0_1_1"/>
<dbReference type="InParanoid" id="O18276"/>
<dbReference type="OMA" id="EIPIDEM"/>
<dbReference type="OrthoDB" id="8890589at2759"/>
<dbReference type="PhylomeDB" id="O18276"/>
<dbReference type="Reactome" id="R-CEL-977443">
    <property type="pathway name" value="GABA receptor activation"/>
</dbReference>
<dbReference type="PRO" id="PR:O18276"/>
<dbReference type="Proteomes" id="UP000001940">
    <property type="component" value="Chromosome III"/>
</dbReference>
<dbReference type="Bgee" id="WBGene00001512">
    <property type="expression patterns" value="Expressed in larva and 2 other cell types or tissues"/>
</dbReference>
<dbReference type="GO" id="GO:0034707">
    <property type="term" value="C:chloride channel complex"/>
    <property type="evidence" value="ECO:0007669"/>
    <property type="project" value="UniProtKB-KW"/>
</dbReference>
<dbReference type="GO" id="GO:1902711">
    <property type="term" value="C:GABA-A receptor complex"/>
    <property type="evidence" value="ECO:0000318"/>
    <property type="project" value="GO_Central"/>
</dbReference>
<dbReference type="GO" id="GO:0045211">
    <property type="term" value="C:postsynaptic membrane"/>
    <property type="evidence" value="ECO:0007669"/>
    <property type="project" value="UniProtKB-SubCell"/>
</dbReference>
<dbReference type="GO" id="GO:0045202">
    <property type="term" value="C:synapse"/>
    <property type="evidence" value="ECO:0000305"/>
    <property type="project" value="WormBase"/>
</dbReference>
<dbReference type="GO" id="GO:0005254">
    <property type="term" value="F:chloride channel activity"/>
    <property type="evidence" value="ECO:0007669"/>
    <property type="project" value="UniProtKB-KW"/>
</dbReference>
<dbReference type="GO" id="GO:0005230">
    <property type="term" value="F:extracellular ligand-gated monoatomic ion channel activity"/>
    <property type="evidence" value="ECO:0000314"/>
    <property type="project" value="WormBase"/>
</dbReference>
<dbReference type="GO" id="GO:0004890">
    <property type="term" value="F:GABA-A receptor activity"/>
    <property type="evidence" value="ECO:0000314"/>
    <property type="project" value="WormBase"/>
</dbReference>
<dbReference type="GO" id="GO:0007268">
    <property type="term" value="P:chemical synaptic transmission"/>
    <property type="evidence" value="ECO:0000250"/>
    <property type="project" value="WormBase"/>
</dbReference>
<dbReference type="GO" id="GO:1902476">
    <property type="term" value="P:chloride transmembrane transport"/>
    <property type="evidence" value="ECO:0000318"/>
    <property type="project" value="GO_Central"/>
</dbReference>
<dbReference type="GO" id="GO:0006811">
    <property type="term" value="P:monoatomic ion transport"/>
    <property type="evidence" value="ECO:0000314"/>
    <property type="project" value="WormBase"/>
</dbReference>
<dbReference type="CDD" id="cd19006">
    <property type="entry name" value="LGIC_ECD_GABAAR_LCCH3-like"/>
    <property type="match status" value="1"/>
</dbReference>
<dbReference type="CDD" id="cd19049">
    <property type="entry name" value="LGIC_TM_anion"/>
    <property type="match status" value="1"/>
</dbReference>
<dbReference type="FunFam" id="2.70.170.10:FF:000096">
    <property type="entry name" value="Gamma-aminobutyric acid receptor subunit beta"/>
    <property type="match status" value="1"/>
</dbReference>
<dbReference type="FunFam" id="1.20.58.390:FF:000040">
    <property type="entry name" value="Gamma-aminobutyric acid receptor subunit beta-like"/>
    <property type="match status" value="1"/>
</dbReference>
<dbReference type="Gene3D" id="2.70.170.10">
    <property type="entry name" value="Neurotransmitter-gated ion-channel ligand-binding domain"/>
    <property type="match status" value="1"/>
</dbReference>
<dbReference type="Gene3D" id="1.20.58.390">
    <property type="entry name" value="Neurotransmitter-gated ion-channel transmembrane domain"/>
    <property type="match status" value="1"/>
</dbReference>
<dbReference type="InterPro" id="IPR006028">
    <property type="entry name" value="GABAA/Glycine_rcpt"/>
</dbReference>
<dbReference type="InterPro" id="IPR002289">
    <property type="entry name" value="GABAAb_rcpt"/>
</dbReference>
<dbReference type="InterPro" id="IPR006202">
    <property type="entry name" value="Neur_chan_lig-bd"/>
</dbReference>
<dbReference type="InterPro" id="IPR036734">
    <property type="entry name" value="Neur_chan_lig-bd_sf"/>
</dbReference>
<dbReference type="InterPro" id="IPR006201">
    <property type="entry name" value="Neur_channel"/>
</dbReference>
<dbReference type="InterPro" id="IPR036719">
    <property type="entry name" value="Neuro-gated_channel_TM_sf"/>
</dbReference>
<dbReference type="InterPro" id="IPR038050">
    <property type="entry name" value="Neuro_actylchol_rec"/>
</dbReference>
<dbReference type="InterPro" id="IPR006029">
    <property type="entry name" value="Neurotrans-gated_channel_TM"/>
</dbReference>
<dbReference type="InterPro" id="IPR018000">
    <property type="entry name" value="Neurotransmitter_ion_chnl_CS"/>
</dbReference>
<dbReference type="NCBIfam" id="TIGR00860">
    <property type="entry name" value="LIC"/>
    <property type="match status" value="1"/>
</dbReference>
<dbReference type="PANTHER" id="PTHR18945">
    <property type="entry name" value="NEUROTRANSMITTER GATED ION CHANNEL"/>
    <property type="match status" value="1"/>
</dbReference>
<dbReference type="Pfam" id="PF02931">
    <property type="entry name" value="Neur_chan_LBD"/>
    <property type="match status" value="1"/>
</dbReference>
<dbReference type="Pfam" id="PF02932">
    <property type="entry name" value="Neur_chan_memb"/>
    <property type="match status" value="1"/>
</dbReference>
<dbReference type="PRINTS" id="PR01160">
    <property type="entry name" value="GABAARBETA"/>
</dbReference>
<dbReference type="PRINTS" id="PR00253">
    <property type="entry name" value="GABAARECEPTR"/>
</dbReference>
<dbReference type="PRINTS" id="PR00252">
    <property type="entry name" value="NRIONCHANNEL"/>
</dbReference>
<dbReference type="SUPFAM" id="SSF90112">
    <property type="entry name" value="Neurotransmitter-gated ion-channel transmembrane pore"/>
    <property type="match status" value="1"/>
</dbReference>
<dbReference type="SUPFAM" id="SSF63712">
    <property type="entry name" value="Nicotinic receptor ligand binding domain-like"/>
    <property type="match status" value="1"/>
</dbReference>
<dbReference type="PROSITE" id="PS00236">
    <property type="entry name" value="NEUROTR_ION_CHANNEL"/>
    <property type="match status" value="1"/>
</dbReference>
<name>GBRB_CAEEL</name>
<organism>
    <name type="scientific">Caenorhabditis elegans</name>
    <dbReference type="NCBI Taxonomy" id="6239"/>
    <lineage>
        <taxon>Eukaryota</taxon>
        <taxon>Metazoa</taxon>
        <taxon>Ecdysozoa</taxon>
        <taxon>Nematoda</taxon>
        <taxon>Chromadorea</taxon>
        <taxon>Rhabditida</taxon>
        <taxon>Rhabditina</taxon>
        <taxon>Rhabditomorpha</taxon>
        <taxon>Rhabditoidea</taxon>
        <taxon>Rhabditidae</taxon>
        <taxon>Peloderinae</taxon>
        <taxon>Caenorhabditis</taxon>
    </lineage>
</organism>
<accession>O18276</accession>
<accession>Q8ITG2</accession>